<sequence>MKRYLSLALAALVLTGCVPPDSVTPTPPVTIEPVTPPDVEVPPPVDTVPQPPKVQSIDWAVSVEPLVAQMVNSDEVATGSILLVDSVKNNTNGALQTAKATAALHQVLSSNKKFVLISPQQLGVAKQTLGLSEEDSFGSRSKAIGLARYVGAQYVLYSDVSGDVKSPTIEMQLMQTQTGEIIWSGNAPVQY</sequence>
<protein>
    <recommendedName>
        <fullName evidence="1">Penicillin-binding protein activator LpoB</fullName>
        <shortName evidence="1">PBP activator LpoB</shortName>
    </recommendedName>
</protein>
<evidence type="ECO:0000255" key="1">
    <source>
        <dbReference type="HAMAP-Rule" id="MF_01889"/>
    </source>
</evidence>
<proteinExistence type="inferred from homology"/>
<reference key="1">
    <citation type="journal article" date="2001" name="Nature">
        <title>Genome sequence of Yersinia pestis, the causative agent of plague.</title>
        <authorList>
            <person name="Parkhill J."/>
            <person name="Wren B.W."/>
            <person name="Thomson N.R."/>
            <person name="Titball R.W."/>
            <person name="Holden M.T.G."/>
            <person name="Prentice M.B."/>
            <person name="Sebaihia M."/>
            <person name="James K.D."/>
            <person name="Churcher C.M."/>
            <person name="Mungall K.L."/>
            <person name="Baker S."/>
            <person name="Basham D."/>
            <person name="Bentley S.D."/>
            <person name="Brooks K."/>
            <person name="Cerdeno-Tarraga A.-M."/>
            <person name="Chillingworth T."/>
            <person name="Cronin A."/>
            <person name="Davies R.M."/>
            <person name="Davis P."/>
            <person name="Dougan G."/>
            <person name="Feltwell T."/>
            <person name="Hamlin N."/>
            <person name="Holroyd S."/>
            <person name="Jagels K."/>
            <person name="Karlyshev A.V."/>
            <person name="Leather S."/>
            <person name="Moule S."/>
            <person name="Oyston P.C.F."/>
            <person name="Quail M.A."/>
            <person name="Rutherford K.M."/>
            <person name="Simmonds M."/>
            <person name="Skelton J."/>
            <person name="Stevens K."/>
            <person name="Whitehead S."/>
            <person name="Barrell B.G."/>
        </authorList>
    </citation>
    <scope>NUCLEOTIDE SEQUENCE [LARGE SCALE GENOMIC DNA]</scope>
    <source>
        <strain>CO-92 / Biovar Orientalis</strain>
    </source>
</reference>
<reference key="2">
    <citation type="journal article" date="2002" name="J. Bacteriol.">
        <title>Genome sequence of Yersinia pestis KIM.</title>
        <authorList>
            <person name="Deng W."/>
            <person name="Burland V."/>
            <person name="Plunkett G. III"/>
            <person name="Boutin A."/>
            <person name="Mayhew G.F."/>
            <person name="Liss P."/>
            <person name="Perna N.T."/>
            <person name="Rose D.J."/>
            <person name="Mau B."/>
            <person name="Zhou S."/>
            <person name="Schwartz D.C."/>
            <person name="Fetherston J.D."/>
            <person name="Lindler L.E."/>
            <person name="Brubaker R.R."/>
            <person name="Plano G.V."/>
            <person name="Straley S.C."/>
            <person name="McDonough K.A."/>
            <person name="Nilles M.L."/>
            <person name="Matson J.S."/>
            <person name="Blattner F.R."/>
            <person name="Perry R.D."/>
        </authorList>
    </citation>
    <scope>NUCLEOTIDE SEQUENCE [LARGE SCALE GENOMIC DNA]</scope>
    <source>
        <strain>KIM10+ / Biovar Mediaevalis</strain>
    </source>
</reference>
<reference key="3">
    <citation type="journal article" date="2004" name="DNA Res.">
        <title>Complete genome sequence of Yersinia pestis strain 91001, an isolate avirulent to humans.</title>
        <authorList>
            <person name="Song Y."/>
            <person name="Tong Z."/>
            <person name="Wang J."/>
            <person name="Wang L."/>
            <person name="Guo Z."/>
            <person name="Han Y."/>
            <person name="Zhang J."/>
            <person name="Pei D."/>
            <person name="Zhou D."/>
            <person name="Qin H."/>
            <person name="Pang X."/>
            <person name="Han Y."/>
            <person name="Zhai J."/>
            <person name="Li M."/>
            <person name="Cui B."/>
            <person name="Qi Z."/>
            <person name="Jin L."/>
            <person name="Dai R."/>
            <person name="Chen F."/>
            <person name="Li S."/>
            <person name="Ye C."/>
            <person name="Du Z."/>
            <person name="Lin W."/>
            <person name="Wang J."/>
            <person name="Yu J."/>
            <person name="Yang H."/>
            <person name="Wang J."/>
            <person name="Huang P."/>
            <person name="Yang R."/>
        </authorList>
    </citation>
    <scope>NUCLEOTIDE SEQUENCE [LARGE SCALE GENOMIC DNA]</scope>
    <source>
        <strain>91001 / Biovar Mediaevalis</strain>
    </source>
</reference>
<feature type="signal peptide" evidence="1">
    <location>
        <begin position="1"/>
        <end position="16"/>
    </location>
</feature>
<feature type="chain" id="PRO_0000405795" description="Penicillin-binding protein activator LpoB">
    <location>
        <begin position="17"/>
        <end position="191"/>
    </location>
</feature>
<feature type="lipid moiety-binding region" description="N-palmitoyl cysteine" evidence="1">
    <location>
        <position position="17"/>
    </location>
</feature>
<feature type="lipid moiety-binding region" description="S-diacylglycerol cysteine" evidence="1">
    <location>
        <position position="17"/>
    </location>
</feature>
<comment type="function">
    <text evidence="1">Regulator of peptidoglycan synthesis that is essential for the function of penicillin-binding protein 1B (PBP1b).</text>
</comment>
<comment type="subunit">
    <text evidence="1">Interacts with PBP1b.</text>
</comment>
<comment type="subcellular location">
    <subcellularLocation>
        <location evidence="1">Cell outer membrane</location>
        <topology evidence="1">Lipid-anchor</topology>
        <orientation evidence="1">Periplasmic side</orientation>
    </subcellularLocation>
</comment>
<comment type="similarity">
    <text evidence="1">Belongs to the LpoB family.</text>
</comment>
<accession>Q7CJ14</accession>
<accession>Q74TD7</accession>
<gene>
    <name evidence="1" type="primary">lpoB</name>
    <name type="ordered locus">YPO1613</name>
    <name type="ordered locus">y1772</name>
    <name type="ordered locus">YP_2241</name>
</gene>
<organism>
    <name type="scientific">Yersinia pestis</name>
    <dbReference type="NCBI Taxonomy" id="632"/>
    <lineage>
        <taxon>Bacteria</taxon>
        <taxon>Pseudomonadati</taxon>
        <taxon>Pseudomonadota</taxon>
        <taxon>Gammaproteobacteria</taxon>
        <taxon>Enterobacterales</taxon>
        <taxon>Yersiniaceae</taxon>
        <taxon>Yersinia</taxon>
    </lineage>
</organism>
<name>LPOB_YERPE</name>
<dbReference type="EMBL" id="AL590842">
    <property type="protein sequence ID" value="CAL20258.1"/>
    <property type="molecule type" value="Genomic_DNA"/>
</dbReference>
<dbReference type="EMBL" id="AE009952">
    <property type="protein sequence ID" value="AAM85340.1"/>
    <property type="molecule type" value="Genomic_DNA"/>
</dbReference>
<dbReference type="EMBL" id="AE017042">
    <property type="protein sequence ID" value="AAS62447.1"/>
    <property type="molecule type" value="Genomic_DNA"/>
</dbReference>
<dbReference type="PIR" id="AH0196">
    <property type="entry name" value="AH0196"/>
</dbReference>
<dbReference type="RefSeq" id="WP_002213089.1">
    <property type="nucleotide sequence ID" value="NZ_WUCM01000118.1"/>
</dbReference>
<dbReference type="RefSeq" id="YP_002346624.1">
    <property type="nucleotide sequence ID" value="NC_003143.1"/>
</dbReference>
<dbReference type="SMR" id="Q7CJ14"/>
<dbReference type="STRING" id="214092.YPO1613"/>
<dbReference type="PaxDb" id="214092-YPO1613"/>
<dbReference type="DNASU" id="1146719"/>
<dbReference type="EnsemblBacteria" id="AAS62447">
    <property type="protein sequence ID" value="AAS62447"/>
    <property type="gene ID" value="YP_2241"/>
</dbReference>
<dbReference type="GeneID" id="57976958"/>
<dbReference type="KEGG" id="ype:YPO1613"/>
<dbReference type="KEGG" id="ypk:y1772"/>
<dbReference type="KEGG" id="ypm:YP_2241"/>
<dbReference type="PATRIC" id="fig|214092.21.peg.1956"/>
<dbReference type="eggNOG" id="COG3417">
    <property type="taxonomic scope" value="Bacteria"/>
</dbReference>
<dbReference type="HOGENOM" id="CLU_092328_0_0_6"/>
<dbReference type="OMA" id="AMQPMVG"/>
<dbReference type="OrthoDB" id="6466283at2"/>
<dbReference type="Proteomes" id="UP000000815">
    <property type="component" value="Chromosome"/>
</dbReference>
<dbReference type="Proteomes" id="UP000001019">
    <property type="component" value="Chromosome"/>
</dbReference>
<dbReference type="Proteomes" id="UP000002490">
    <property type="component" value="Chromosome"/>
</dbReference>
<dbReference type="GO" id="GO:0031241">
    <property type="term" value="C:periplasmic side of cell outer membrane"/>
    <property type="evidence" value="ECO:0000318"/>
    <property type="project" value="GO_Central"/>
</dbReference>
<dbReference type="GO" id="GO:0030234">
    <property type="term" value="F:enzyme regulator activity"/>
    <property type="evidence" value="ECO:0000318"/>
    <property type="project" value="GO_Central"/>
</dbReference>
<dbReference type="GO" id="GO:0009252">
    <property type="term" value="P:peptidoglycan biosynthetic process"/>
    <property type="evidence" value="ECO:0000318"/>
    <property type="project" value="GO_Central"/>
</dbReference>
<dbReference type="GO" id="GO:0008360">
    <property type="term" value="P:regulation of cell shape"/>
    <property type="evidence" value="ECO:0007669"/>
    <property type="project" value="UniProtKB-KW"/>
</dbReference>
<dbReference type="Gene3D" id="3.40.50.10610">
    <property type="entry name" value="ABC-type transport auxiliary lipoprotein component"/>
    <property type="match status" value="1"/>
</dbReference>
<dbReference type="HAMAP" id="MF_01889">
    <property type="entry name" value="LpoB"/>
    <property type="match status" value="1"/>
</dbReference>
<dbReference type="InterPro" id="IPR014094">
    <property type="entry name" value="LpoB"/>
</dbReference>
<dbReference type="InterPro" id="IPR012640">
    <property type="entry name" value="Membr_lipoprot_lipid_attach_CS"/>
</dbReference>
<dbReference type="NCBIfam" id="TIGR02722">
    <property type="entry name" value="lp"/>
    <property type="match status" value="1"/>
</dbReference>
<dbReference type="PANTHER" id="PTHR40593">
    <property type="entry name" value="PENICILLIN-BINDING PROTEIN ACTIVATOR LPOB"/>
    <property type="match status" value="1"/>
</dbReference>
<dbReference type="PANTHER" id="PTHR40593:SF1">
    <property type="entry name" value="PENICILLIN-BINDING PROTEIN ACTIVATOR LPOB"/>
    <property type="match status" value="1"/>
</dbReference>
<dbReference type="Pfam" id="PF08139">
    <property type="entry name" value="LPAM_1"/>
    <property type="match status" value="1"/>
</dbReference>
<dbReference type="Pfam" id="PF13036">
    <property type="entry name" value="LpoB"/>
    <property type="match status" value="1"/>
</dbReference>
<dbReference type="PROSITE" id="PS51257">
    <property type="entry name" value="PROKAR_LIPOPROTEIN"/>
    <property type="match status" value="1"/>
</dbReference>
<keyword id="KW-0998">Cell outer membrane</keyword>
<keyword id="KW-0133">Cell shape</keyword>
<keyword id="KW-0449">Lipoprotein</keyword>
<keyword id="KW-0472">Membrane</keyword>
<keyword id="KW-0564">Palmitate</keyword>
<keyword id="KW-0573">Peptidoglycan synthesis</keyword>
<keyword id="KW-1185">Reference proteome</keyword>
<keyword id="KW-0732">Signal</keyword>